<reference key="1">
    <citation type="journal article" date="2011" name="Proc. Natl. Acad. Sci. U.S.A.">
        <title>Genomic anatomy of Escherichia coli O157:H7 outbreaks.</title>
        <authorList>
            <person name="Eppinger M."/>
            <person name="Mammel M.K."/>
            <person name="Leclerc J.E."/>
            <person name="Ravel J."/>
            <person name="Cebula T.A."/>
        </authorList>
    </citation>
    <scope>NUCLEOTIDE SEQUENCE [LARGE SCALE GENOMIC DNA]</scope>
    <source>
        <strain>EC4115 / EHEC</strain>
    </source>
</reference>
<proteinExistence type="inferred from homology"/>
<name>ZUPT_ECO5E</name>
<protein>
    <recommendedName>
        <fullName evidence="1">Zinc transporter ZupT</fullName>
    </recommendedName>
</protein>
<evidence type="ECO:0000255" key="1">
    <source>
        <dbReference type="HAMAP-Rule" id="MF_00548"/>
    </source>
</evidence>
<dbReference type="EMBL" id="CP001164">
    <property type="protein sequence ID" value="ACI34827.1"/>
    <property type="molecule type" value="Genomic_DNA"/>
</dbReference>
<dbReference type="RefSeq" id="WP_001295627.1">
    <property type="nucleotide sequence ID" value="NC_011353.1"/>
</dbReference>
<dbReference type="SMR" id="B5YR85"/>
<dbReference type="GeneID" id="93778954"/>
<dbReference type="KEGG" id="ecf:ECH74115_4353"/>
<dbReference type="HOGENOM" id="CLU_015114_1_3_6"/>
<dbReference type="GO" id="GO:0005886">
    <property type="term" value="C:plasma membrane"/>
    <property type="evidence" value="ECO:0007669"/>
    <property type="project" value="UniProtKB-SubCell"/>
</dbReference>
<dbReference type="GO" id="GO:0046872">
    <property type="term" value="F:metal ion binding"/>
    <property type="evidence" value="ECO:0007669"/>
    <property type="project" value="UniProtKB-KW"/>
</dbReference>
<dbReference type="GO" id="GO:0005385">
    <property type="term" value="F:zinc ion transmembrane transporter activity"/>
    <property type="evidence" value="ECO:0007669"/>
    <property type="project" value="UniProtKB-UniRule"/>
</dbReference>
<dbReference type="HAMAP" id="MF_00548">
    <property type="entry name" value="ZupT"/>
    <property type="match status" value="1"/>
</dbReference>
<dbReference type="InterPro" id="IPR003689">
    <property type="entry name" value="ZIP"/>
</dbReference>
<dbReference type="InterPro" id="IPR023498">
    <property type="entry name" value="Zn_transptr_ZupT"/>
</dbReference>
<dbReference type="NCBIfam" id="NF003243">
    <property type="entry name" value="PRK04201.1"/>
    <property type="match status" value="1"/>
</dbReference>
<dbReference type="PANTHER" id="PTHR11040:SF205">
    <property type="entry name" value="ZINC TRANSPORTER ZUPT"/>
    <property type="match status" value="1"/>
</dbReference>
<dbReference type="PANTHER" id="PTHR11040">
    <property type="entry name" value="ZINC/IRON TRANSPORTER"/>
    <property type="match status" value="1"/>
</dbReference>
<dbReference type="Pfam" id="PF02535">
    <property type="entry name" value="Zip"/>
    <property type="match status" value="2"/>
</dbReference>
<comment type="function">
    <text evidence="1">Mediates zinc uptake. May also transport other divalent cations.</text>
</comment>
<comment type="catalytic activity">
    <reaction evidence="1">
        <text>Zn(2+)(in) = Zn(2+)(out)</text>
        <dbReference type="Rhea" id="RHEA:29351"/>
        <dbReference type="ChEBI" id="CHEBI:29105"/>
    </reaction>
</comment>
<comment type="subcellular location">
    <subcellularLocation>
        <location evidence="1">Cell inner membrane</location>
        <topology evidence="1">Multi-pass membrane protein</topology>
    </subcellularLocation>
</comment>
<comment type="similarity">
    <text evidence="1">Belongs to the ZIP transporter (TC 2.A.5) family. ZupT subfamily.</text>
</comment>
<gene>
    <name evidence="1" type="primary">zupT</name>
    <name type="ordered locus">ECH74115_4353</name>
</gene>
<organism>
    <name type="scientific">Escherichia coli O157:H7 (strain EC4115 / EHEC)</name>
    <dbReference type="NCBI Taxonomy" id="444450"/>
    <lineage>
        <taxon>Bacteria</taxon>
        <taxon>Pseudomonadati</taxon>
        <taxon>Pseudomonadota</taxon>
        <taxon>Gammaproteobacteria</taxon>
        <taxon>Enterobacterales</taxon>
        <taxon>Enterobacteriaceae</taxon>
        <taxon>Escherichia</taxon>
    </lineage>
</organism>
<feature type="chain" id="PRO_1000128949" description="Zinc transporter ZupT">
    <location>
        <begin position="1"/>
        <end position="257"/>
    </location>
</feature>
<feature type="transmembrane region" description="Helical" evidence="1">
    <location>
        <begin position="5"/>
        <end position="25"/>
    </location>
</feature>
<feature type="transmembrane region" description="Helical" evidence="1">
    <location>
        <begin position="32"/>
        <end position="52"/>
    </location>
</feature>
<feature type="transmembrane region" description="Helical" evidence="1">
    <location>
        <begin position="61"/>
        <end position="81"/>
    </location>
</feature>
<feature type="transmembrane region" description="Helical" evidence="1">
    <location>
        <begin position="137"/>
        <end position="157"/>
    </location>
</feature>
<feature type="transmembrane region" description="Helical" evidence="1">
    <location>
        <begin position="171"/>
        <end position="191"/>
    </location>
</feature>
<feature type="transmembrane region" description="Helical" evidence="1">
    <location>
        <begin position="195"/>
        <end position="215"/>
    </location>
</feature>
<feature type="transmembrane region" description="Helical" evidence="1">
    <location>
        <begin position="236"/>
        <end position="256"/>
    </location>
</feature>
<feature type="binding site" description="M2 metal binding site" evidence="1">
    <location>
        <position position="120"/>
    </location>
    <ligand>
        <name>Fe(2+)</name>
        <dbReference type="ChEBI" id="CHEBI:29033"/>
    </ligand>
</feature>
<feature type="binding site" description="M2 metal binding site" evidence="1">
    <location>
        <position position="123"/>
    </location>
    <ligand>
        <name>Fe(2+)</name>
        <dbReference type="ChEBI" id="CHEBI:29033"/>
    </ligand>
</feature>
<feature type="binding site" description="M1 metal binding site" evidence="1">
    <location>
        <position position="123"/>
    </location>
    <ligand>
        <name>Zn(2+)</name>
        <dbReference type="ChEBI" id="CHEBI:29105"/>
    </ligand>
</feature>
<feature type="binding site" description="M1 metal binding site" evidence="1">
    <location>
        <position position="148"/>
    </location>
    <ligand>
        <name>Zn(2+)</name>
        <dbReference type="ChEBI" id="CHEBI:29105"/>
    </ligand>
</feature>
<feature type="binding site" description="M2 metal binding site" evidence="1">
    <location>
        <position position="149"/>
    </location>
    <ligand>
        <name>Fe(2+)</name>
        <dbReference type="ChEBI" id="CHEBI:29033"/>
    </ligand>
</feature>
<feature type="binding site" description="M2 metal binding site" evidence="1">
    <location>
        <position position="152"/>
    </location>
    <ligand>
        <name>Fe(2+)</name>
        <dbReference type="ChEBI" id="CHEBI:29033"/>
    </ligand>
</feature>
<feature type="binding site" description="M1 metal binding site" evidence="1">
    <location>
        <position position="152"/>
    </location>
    <ligand>
        <name>Zn(2+)</name>
        <dbReference type="ChEBI" id="CHEBI:29105"/>
    </ligand>
</feature>
<feature type="binding site" description="M2 metal binding site" evidence="1">
    <location>
        <position position="181"/>
    </location>
    <ligand>
        <name>Fe(2+)</name>
        <dbReference type="ChEBI" id="CHEBI:29033"/>
    </ligand>
</feature>
<keyword id="KW-0997">Cell inner membrane</keyword>
<keyword id="KW-1003">Cell membrane</keyword>
<keyword id="KW-0406">Ion transport</keyword>
<keyword id="KW-0408">Iron</keyword>
<keyword id="KW-0472">Membrane</keyword>
<keyword id="KW-0479">Metal-binding</keyword>
<keyword id="KW-0812">Transmembrane</keyword>
<keyword id="KW-1133">Transmembrane helix</keyword>
<keyword id="KW-0813">Transport</keyword>
<keyword id="KW-0862">Zinc</keyword>
<keyword id="KW-0864">Zinc transport</keyword>
<accession>B5YR85</accession>
<sequence>MSVPLILTILAGAATFIGAFLGVLGQKPSNRLLAFSLGFAAGIMLLISLMEMLPAALAAEGMSPVLGYGMFIFGLLGYFGLDRMLPHAHPQDLMQKSVQPLPKSIKRTAILLTLGISLHNFPEGIATFVTASSNLELGFGIALAVALHNIPEGLAVAGPVYAATGSKRTAILWAGISGLAEILGGVLAWLILGSMISPVVMAAIMAAVAGIMVALSVDELMPLAKEIDPNNNPSYGVLCGMSVMGFSLVLLQTAGIG</sequence>